<feature type="chain" id="PRO_1000031963" description="Elongation factor 4">
    <location>
        <begin position="1"/>
        <end position="601"/>
    </location>
</feature>
<feature type="domain" description="tr-type G">
    <location>
        <begin position="6"/>
        <end position="188"/>
    </location>
</feature>
<feature type="binding site" evidence="1">
    <location>
        <begin position="18"/>
        <end position="23"/>
    </location>
    <ligand>
        <name>GTP</name>
        <dbReference type="ChEBI" id="CHEBI:37565"/>
    </ligand>
</feature>
<feature type="binding site" evidence="1">
    <location>
        <begin position="135"/>
        <end position="138"/>
    </location>
    <ligand>
        <name>GTP</name>
        <dbReference type="ChEBI" id="CHEBI:37565"/>
    </ligand>
</feature>
<dbReference type="EC" id="3.6.5.n1" evidence="1"/>
<dbReference type="EMBL" id="CP000769">
    <property type="protein sequence ID" value="ABS26399.1"/>
    <property type="molecule type" value="Genomic_DNA"/>
</dbReference>
<dbReference type="RefSeq" id="WP_012096981.1">
    <property type="nucleotide sequence ID" value="NC_009675.1"/>
</dbReference>
<dbReference type="SMR" id="A7HCF3"/>
<dbReference type="STRING" id="404589.Anae109_2197"/>
<dbReference type="KEGG" id="afw:Anae109_2197"/>
<dbReference type="eggNOG" id="COG0481">
    <property type="taxonomic scope" value="Bacteria"/>
</dbReference>
<dbReference type="HOGENOM" id="CLU_009995_3_3_7"/>
<dbReference type="OrthoDB" id="9760518at2"/>
<dbReference type="Proteomes" id="UP000006382">
    <property type="component" value="Chromosome"/>
</dbReference>
<dbReference type="GO" id="GO:0005886">
    <property type="term" value="C:plasma membrane"/>
    <property type="evidence" value="ECO:0007669"/>
    <property type="project" value="UniProtKB-SubCell"/>
</dbReference>
<dbReference type="GO" id="GO:0005525">
    <property type="term" value="F:GTP binding"/>
    <property type="evidence" value="ECO:0007669"/>
    <property type="project" value="UniProtKB-UniRule"/>
</dbReference>
<dbReference type="GO" id="GO:0003924">
    <property type="term" value="F:GTPase activity"/>
    <property type="evidence" value="ECO:0007669"/>
    <property type="project" value="UniProtKB-UniRule"/>
</dbReference>
<dbReference type="GO" id="GO:0043022">
    <property type="term" value="F:ribosome binding"/>
    <property type="evidence" value="ECO:0007669"/>
    <property type="project" value="UniProtKB-UniRule"/>
</dbReference>
<dbReference type="GO" id="GO:0003746">
    <property type="term" value="F:translation elongation factor activity"/>
    <property type="evidence" value="ECO:0007669"/>
    <property type="project" value="UniProtKB-UniRule"/>
</dbReference>
<dbReference type="GO" id="GO:0045727">
    <property type="term" value="P:positive regulation of translation"/>
    <property type="evidence" value="ECO:0007669"/>
    <property type="project" value="UniProtKB-UniRule"/>
</dbReference>
<dbReference type="CDD" id="cd03699">
    <property type="entry name" value="EF4_II"/>
    <property type="match status" value="1"/>
</dbReference>
<dbReference type="CDD" id="cd16260">
    <property type="entry name" value="EF4_III"/>
    <property type="match status" value="1"/>
</dbReference>
<dbReference type="CDD" id="cd01890">
    <property type="entry name" value="LepA"/>
    <property type="match status" value="1"/>
</dbReference>
<dbReference type="CDD" id="cd03709">
    <property type="entry name" value="lepA_C"/>
    <property type="match status" value="1"/>
</dbReference>
<dbReference type="FunFam" id="3.40.50.300:FF:000078">
    <property type="entry name" value="Elongation factor 4"/>
    <property type="match status" value="1"/>
</dbReference>
<dbReference type="FunFam" id="2.40.30.10:FF:000015">
    <property type="entry name" value="Translation factor GUF1, mitochondrial"/>
    <property type="match status" value="1"/>
</dbReference>
<dbReference type="FunFam" id="3.30.70.240:FF:000007">
    <property type="entry name" value="Translation factor GUF1, mitochondrial"/>
    <property type="match status" value="1"/>
</dbReference>
<dbReference type="FunFam" id="3.30.70.2570:FF:000001">
    <property type="entry name" value="Translation factor GUF1, mitochondrial"/>
    <property type="match status" value="1"/>
</dbReference>
<dbReference type="FunFam" id="3.30.70.870:FF:000004">
    <property type="entry name" value="Translation factor GUF1, mitochondrial"/>
    <property type="match status" value="1"/>
</dbReference>
<dbReference type="Gene3D" id="3.30.70.240">
    <property type="match status" value="1"/>
</dbReference>
<dbReference type="Gene3D" id="3.30.70.2570">
    <property type="entry name" value="Elongation factor 4, C-terminal domain"/>
    <property type="match status" value="1"/>
</dbReference>
<dbReference type="Gene3D" id="3.30.70.870">
    <property type="entry name" value="Elongation Factor G (Translational Gtpase), domain 3"/>
    <property type="match status" value="1"/>
</dbReference>
<dbReference type="Gene3D" id="3.40.50.300">
    <property type="entry name" value="P-loop containing nucleotide triphosphate hydrolases"/>
    <property type="match status" value="1"/>
</dbReference>
<dbReference type="Gene3D" id="2.40.30.10">
    <property type="entry name" value="Translation factors"/>
    <property type="match status" value="1"/>
</dbReference>
<dbReference type="HAMAP" id="MF_00071">
    <property type="entry name" value="LepA"/>
    <property type="match status" value="1"/>
</dbReference>
<dbReference type="InterPro" id="IPR006297">
    <property type="entry name" value="EF-4"/>
</dbReference>
<dbReference type="InterPro" id="IPR035647">
    <property type="entry name" value="EFG_III/V"/>
</dbReference>
<dbReference type="InterPro" id="IPR000640">
    <property type="entry name" value="EFG_V-like"/>
</dbReference>
<dbReference type="InterPro" id="IPR004161">
    <property type="entry name" value="EFTu-like_2"/>
</dbReference>
<dbReference type="InterPro" id="IPR031157">
    <property type="entry name" value="G_TR_CS"/>
</dbReference>
<dbReference type="InterPro" id="IPR038363">
    <property type="entry name" value="LepA_C_sf"/>
</dbReference>
<dbReference type="InterPro" id="IPR013842">
    <property type="entry name" value="LepA_CTD"/>
</dbReference>
<dbReference type="InterPro" id="IPR035654">
    <property type="entry name" value="LepA_IV"/>
</dbReference>
<dbReference type="InterPro" id="IPR027417">
    <property type="entry name" value="P-loop_NTPase"/>
</dbReference>
<dbReference type="InterPro" id="IPR005225">
    <property type="entry name" value="Small_GTP-bd"/>
</dbReference>
<dbReference type="InterPro" id="IPR000795">
    <property type="entry name" value="T_Tr_GTP-bd_dom"/>
</dbReference>
<dbReference type="InterPro" id="IPR009000">
    <property type="entry name" value="Transl_B-barrel_sf"/>
</dbReference>
<dbReference type="NCBIfam" id="TIGR01393">
    <property type="entry name" value="lepA"/>
    <property type="match status" value="1"/>
</dbReference>
<dbReference type="NCBIfam" id="TIGR00231">
    <property type="entry name" value="small_GTP"/>
    <property type="match status" value="1"/>
</dbReference>
<dbReference type="PANTHER" id="PTHR43512:SF4">
    <property type="entry name" value="TRANSLATION FACTOR GUF1 HOMOLOG, CHLOROPLASTIC"/>
    <property type="match status" value="1"/>
</dbReference>
<dbReference type="PANTHER" id="PTHR43512">
    <property type="entry name" value="TRANSLATION FACTOR GUF1-RELATED"/>
    <property type="match status" value="1"/>
</dbReference>
<dbReference type="Pfam" id="PF00679">
    <property type="entry name" value="EFG_C"/>
    <property type="match status" value="1"/>
</dbReference>
<dbReference type="Pfam" id="PF00009">
    <property type="entry name" value="GTP_EFTU"/>
    <property type="match status" value="1"/>
</dbReference>
<dbReference type="Pfam" id="PF03144">
    <property type="entry name" value="GTP_EFTU_D2"/>
    <property type="match status" value="1"/>
</dbReference>
<dbReference type="Pfam" id="PF06421">
    <property type="entry name" value="LepA_C"/>
    <property type="match status" value="1"/>
</dbReference>
<dbReference type="PRINTS" id="PR00315">
    <property type="entry name" value="ELONGATNFCT"/>
</dbReference>
<dbReference type="SUPFAM" id="SSF54980">
    <property type="entry name" value="EF-G C-terminal domain-like"/>
    <property type="match status" value="2"/>
</dbReference>
<dbReference type="SUPFAM" id="SSF52540">
    <property type="entry name" value="P-loop containing nucleoside triphosphate hydrolases"/>
    <property type="match status" value="1"/>
</dbReference>
<dbReference type="SUPFAM" id="SSF50447">
    <property type="entry name" value="Translation proteins"/>
    <property type="match status" value="1"/>
</dbReference>
<dbReference type="PROSITE" id="PS00301">
    <property type="entry name" value="G_TR_1"/>
    <property type="match status" value="1"/>
</dbReference>
<dbReference type="PROSITE" id="PS51722">
    <property type="entry name" value="G_TR_2"/>
    <property type="match status" value="1"/>
</dbReference>
<reference key="1">
    <citation type="journal article" date="2015" name="Genome Announc.">
        <title>Complete genome sequence of Anaeromyxobacter sp. Fw109-5, an anaerobic, metal-reducing bacterium isolated from a contaminated subsurface environment.</title>
        <authorList>
            <person name="Hwang C."/>
            <person name="Copeland A."/>
            <person name="Lucas S."/>
            <person name="Lapidus A."/>
            <person name="Barry K."/>
            <person name="Glavina Del Rio T."/>
            <person name="Dalin E."/>
            <person name="Tice H."/>
            <person name="Pitluck S."/>
            <person name="Sims D."/>
            <person name="Brettin T."/>
            <person name="Bruce D.C."/>
            <person name="Detter J.C."/>
            <person name="Han C.S."/>
            <person name="Schmutz J."/>
            <person name="Larimer F.W."/>
            <person name="Land M.L."/>
            <person name="Hauser L.J."/>
            <person name="Kyrpides N."/>
            <person name="Lykidis A."/>
            <person name="Richardson P."/>
            <person name="Belieav A."/>
            <person name="Sanford R.A."/>
            <person name="Loeffler F.E."/>
            <person name="Fields M.W."/>
        </authorList>
    </citation>
    <scope>NUCLEOTIDE SEQUENCE [LARGE SCALE GENOMIC DNA]</scope>
    <source>
        <strain>Fw109-5</strain>
    </source>
</reference>
<gene>
    <name evidence="1" type="primary">lepA</name>
    <name type="ordered locus">Anae109_2197</name>
</gene>
<evidence type="ECO:0000255" key="1">
    <source>
        <dbReference type="HAMAP-Rule" id="MF_00071"/>
    </source>
</evidence>
<organism>
    <name type="scientific">Anaeromyxobacter sp. (strain Fw109-5)</name>
    <dbReference type="NCBI Taxonomy" id="404589"/>
    <lineage>
        <taxon>Bacteria</taxon>
        <taxon>Pseudomonadati</taxon>
        <taxon>Myxococcota</taxon>
        <taxon>Myxococcia</taxon>
        <taxon>Myxococcales</taxon>
        <taxon>Cystobacterineae</taxon>
        <taxon>Anaeromyxobacteraceae</taxon>
        <taxon>Anaeromyxobacter</taxon>
    </lineage>
</organism>
<comment type="function">
    <text evidence="1">Required for accurate and efficient protein synthesis under certain stress conditions. May act as a fidelity factor of the translation reaction, by catalyzing a one-codon backward translocation of tRNAs on improperly translocated ribosomes. Back-translocation proceeds from a post-translocation (POST) complex to a pre-translocation (PRE) complex, thus giving elongation factor G a second chance to translocate the tRNAs correctly. Binds to ribosomes in a GTP-dependent manner.</text>
</comment>
<comment type="catalytic activity">
    <reaction evidence="1">
        <text>GTP + H2O = GDP + phosphate + H(+)</text>
        <dbReference type="Rhea" id="RHEA:19669"/>
        <dbReference type="ChEBI" id="CHEBI:15377"/>
        <dbReference type="ChEBI" id="CHEBI:15378"/>
        <dbReference type="ChEBI" id="CHEBI:37565"/>
        <dbReference type="ChEBI" id="CHEBI:43474"/>
        <dbReference type="ChEBI" id="CHEBI:58189"/>
        <dbReference type="EC" id="3.6.5.n1"/>
    </reaction>
</comment>
<comment type="subcellular location">
    <subcellularLocation>
        <location evidence="1">Cell inner membrane</location>
        <topology evidence="1">Peripheral membrane protein</topology>
        <orientation evidence="1">Cytoplasmic side</orientation>
    </subcellularLocation>
</comment>
<comment type="similarity">
    <text evidence="1">Belongs to the TRAFAC class translation factor GTPase superfamily. Classic translation factor GTPase family. LepA subfamily.</text>
</comment>
<sequence>MPESNAHIRNFSIIAHIDHGKSTLADRLLEHTGTVSERHAQAQFLDNMELERERGITIKAQTVRMRYRARDGVDYELNLIDTPGHVDFAYEVSRSLAACEGAILVVDATQGVEAQTLANVYQALDHDLEIIPVINKVDLPSADVPGVRAEIEEVIGLDASEAVPASAKEGIGIGDILEQIVRKVPPPKGDPEAPLKAIIFDSWYDSYRGVVMLVRVFEGTLAPKQKIQLVSNRKKFEVQELGIFAPFAKPVQRLTAGEVGIVVANVKEVQDAKVGDTVTEADRPTEDPFPGFKVVKPMVFSGVFPIEAKDYEQLRDALEKLRLNDSAFTFEPETSTALGFGFRCGYLGLLHMEIVQERLEREYNLSLITTAPSVVYRVTDTQGEVVEIDNPAKLPPVQRIAKLEEPHLTCHIHARTDDVGAILQLCQDRRGVQRDLKYLGTKRVQITYDIPLAEVVFDFFDKLKSVSRGYASLDYELKGYEEADLVKLDILINGEPVDALSVIVHRERAYHRGRELCQKLREVIPKQMYEVAIQAAIGAKIIARETVKAFRKDVIAKCYGGDISRKRKLLERQKEGKKRMKQVGSVEIPQEAFLAVLKVEE</sequence>
<accession>A7HCF3</accession>
<protein>
    <recommendedName>
        <fullName evidence="1">Elongation factor 4</fullName>
        <shortName evidence="1">EF-4</shortName>
        <ecNumber evidence="1">3.6.5.n1</ecNumber>
    </recommendedName>
    <alternativeName>
        <fullName evidence="1">Ribosomal back-translocase LepA</fullName>
    </alternativeName>
</protein>
<name>LEPA_ANADF</name>
<keyword id="KW-0997">Cell inner membrane</keyword>
<keyword id="KW-1003">Cell membrane</keyword>
<keyword id="KW-0342">GTP-binding</keyword>
<keyword id="KW-0378">Hydrolase</keyword>
<keyword id="KW-0472">Membrane</keyword>
<keyword id="KW-0547">Nucleotide-binding</keyword>
<keyword id="KW-0648">Protein biosynthesis</keyword>
<keyword id="KW-1185">Reference proteome</keyword>
<proteinExistence type="inferred from homology"/>